<sequence length="769" mass="85083">MNRSDAYGYFRNQGREYVITTPRTPARWFNYLFNDTYYTEISQTGQGDSVAFRPHNRTLTRGFRYFYLKDLETGGTWSPLYQPLKTEPEAYECIHSLGTTEIRSVSQEIASSIHVFVPRAGQQEIWTVTLTNTGVKPRSLSLFTAFSLENGGVMGSKCQFDQESQILSSYSFPYHVTYGQKAGCDDHTNVVYVYPDYPADSYDCSQRAFFGGDDIYELPAAVQKGRCSGGQAEAENPLGALQQTITLEPGEQAVRHFVVGCASSLEEIRSSKAELAAKGYAVLLQETEDYWEGITGMFRVETPDDDVNAFMNIWLKKQIVMQTRTNRMSSYCPVRNQLQDALGYALVDPAGAAEYMISVLQGQERSGFIQQWIMTDGSPPKNLCLLKHTDGPVWLIICITALLNQCGDTELLQRQVGFKGSSDSATIYQHLLLAADYMAGETGAHGLCLMGDGDWNDPINGPGRLGRGESAWNTMALVYAIQALIPFCEQLGDTENAEQLNTVARRLADAVNRICWDGGWYVAGFDDDGTPFGTAQDEEGKLFLNTQTWAIMSGIASGERLDQCLAAIDSLDTPFGPRLLEPPFSGWNPKWGRISLKLAGTTENGSVYCHASMFKAFADCIAGRGSEAWQTISRTLPTNPDNPPGQNGQVPIFVPNYYFGLADSPNFGKSSHHVSTGTVGWMLWTTLEYALGIRATANGLKIDPCIPADWPEYTVERKYRSASYRIHVLNPSGISRGTVKVTVDGEAWMAAALPYEAGREYQVTVQLEQ</sequence>
<comment type="function">
    <text evidence="2">Glycoside phosphorylase that catalyzes the reversible phosphorolysis of 3-O-beta-D-glucosyl-D-glucuronate into D-glucuronic acid and alpha-D-glucose 1-phosphate (PubMed:35947916). Cannot phosphorolyze cellobionic acid and laminaribiose (PubMed:35947916). In the reverse direction, using alpha-D-glucose 1-phosphate as a donor substrate, the enzyme acts on D-glucuronate and its artificial derivative p-nitrophenyl-beta-D-glucuronide (PubMed:35947916). The apparent catalytic efficiency towards p-nitrophenyl-beta-D-glucuronide is approximately 5-fold higher than that towards D-glucuronic acid (PubMed:35947916). Is probably involved in the metabolism of oligosaccharides containing the 3-O-beta-D-glucopyranosyl-beta-D-glucuronide structure released from bacterial and plant acidic carbohydrates (PubMed:35947916).</text>
</comment>
<comment type="catalytic activity">
    <reaction evidence="2">
        <text>3-O-beta-D-glucosyl-D-glucuronate + phosphate = aldehydo-D-glucuronate + alpha-D-glucose 1-phosphate</text>
        <dbReference type="Rhea" id="RHEA:78711"/>
        <dbReference type="ChEBI" id="CHEBI:43474"/>
        <dbReference type="ChEBI" id="CHEBI:58601"/>
        <dbReference type="ChEBI" id="CHEBI:76826"/>
        <dbReference type="ChEBI" id="CHEBI:142686"/>
        <dbReference type="EC" id="2.4.1.392"/>
    </reaction>
</comment>
<comment type="catalytic activity">
    <reaction evidence="2">
        <text>a 3-O-beta-D-glucosyl-beta-D-glucuronoside + phosphate = a beta-D-glucuronoside + alpha-D-glucose 1-phosphate</text>
        <dbReference type="Rhea" id="RHEA:78699"/>
        <dbReference type="ChEBI" id="CHEBI:43474"/>
        <dbReference type="ChEBI" id="CHEBI:58601"/>
        <dbReference type="ChEBI" id="CHEBI:83411"/>
        <dbReference type="ChEBI" id="CHEBI:229542"/>
        <dbReference type="EC" id="2.4.1.392"/>
    </reaction>
</comment>
<comment type="biophysicochemical properties">
    <kinetics>
        <KM evidence="2">7.89 mM for 3-O-beta-D-glucosyl-D-glucuronate</KM>
        <KM evidence="2">1.52 mM for phosphate</KM>
        <KM evidence="2">1.57 mM for alpha-D-glucose 1-phosphate</KM>
        <KM evidence="2">11.7 mM for D-glucuronic acid</KM>
        <KM evidence="2">3.02 mM for p-nitrophenyl-beta-D-glucuronide</KM>
        <text evidence="2">kcat is 102 sec(-1) with O-beta-D-glucosyl-D-glucuronate as substrate (PubMed:35947916). kcat is 156 sec(-1) with alpha-D-glucose 1-phosphate as substrate (PubMed:35947916). kcat is 351 sec(-1) with D-glucuronic acid as substrate (PubMed:35947916). kcat is 433 sec(-1) with p-nitrophenyl-beta-D-glucuronide as substrate (PubMed:35947916).</text>
    </kinetics>
    <phDependence>
        <text evidence="2">Optimum pH is 6.9 (for the reverse phosphorolytic activity) (PubMed:35947916). Stable between pH 6.6 and 8.8 at 4 degrees Celsius for 24 hours (PubMed:35947916).</text>
    </phDependence>
    <temperatureDependence>
        <text evidence="2">Optimum temperature is 35 degrees Celsius (for the reverse phosphorolytic activity) (PubMed:35947916). Retains more than 90% of its original activity after incubation at 30 degrees Celsius for 1 hour (PubMed:35947916).</text>
    </temperatureDependence>
</comment>
<comment type="subunit">
    <text evidence="2">Homodimer.</text>
</comment>
<comment type="subcellular location">
    <subcellularLocation>
        <location evidence="4">Cytoplasm</location>
    </subcellularLocation>
</comment>
<comment type="similarity">
    <text evidence="4">Belongs to the glycosyl hydrolase 94 family.</text>
</comment>
<gene>
    <name evidence="5" type="ORF">PBOR_13355</name>
</gene>
<protein>
    <recommendedName>
        <fullName evidence="3">3-O-beta-D-glucopyranosyl-beta-D-glucuronide phosphorylase</fullName>
        <ecNumber evidence="2">2.4.1.392</ecNumber>
    </recommendedName>
</protein>
<proteinExistence type="evidence at protein level"/>
<keyword id="KW-0119">Carbohydrate metabolism</keyword>
<keyword id="KW-0963">Cytoplasm</keyword>
<keyword id="KW-0328">Glycosyltransferase</keyword>
<keyword id="KW-0808">Transferase</keyword>
<accession>A0A089MMR2</accession>
<evidence type="ECO:0000250" key="1">
    <source>
        <dbReference type="UniProtKB" id="Q76IQ9"/>
    </source>
</evidence>
<evidence type="ECO:0000269" key="2">
    <source>
    </source>
</evidence>
<evidence type="ECO:0000303" key="3">
    <source>
    </source>
</evidence>
<evidence type="ECO:0000305" key="4">
    <source>
    </source>
</evidence>
<evidence type="ECO:0000312" key="5">
    <source>
        <dbReference type="EMBL" id="AIQ57809.1"/>
    </source>
</evidence>
<reference evidence="5" key="1">
    <citation type="submission" date="2014-08" db="EMBL/GenBank/DDBJ databases">
        <title>Comparative genomics of the Paenibacillus odorifer group.</title>
        <authorList>
            <person name="den Bakker H.C."/>
            <person name="Tsai Y.-C.Y.-C."/>
            <person name="Martin N."/>
            <person name="Korlach J."/>
            <person name="Wiedmann M."/>
        </authorList>
    </citation>
    <scope>NUCLEOTIDE SEQUENCE [LARGE SCALE GENOMIC DNA]</scope>
    <source>
        <strain>DSM 13188 / CCUG 43137 / CIP 107056 / KCTC 3805 / KK19</strain>
    </source>
</reference>
<reference key="2">
    <citation type="journal article" date="2022" name="Biochem. Biophys. Res. Commun.">
        <title>Functional characterization of a novel GH94 glycoside phosphorylase, 3-O-beta-d-glucopyranosyl beta-d-glucuronide phosphorylase, and implication of the metabolic pathway of acidic carbohydrates in Paenibacillus borealis.</title>
        <authorList>
            <person name="Isono N."/>
            <person name="Mizutani E."/>
            <person name="Hayashida H."/>
            <person name="Katsuzaki H."/>
            <person name="Saburi W."/>
        </authorList>
    </citation>
    <scope>FUNCTION</scope>
    <scope>CATALYTIC ACTIVITY</scope>
    <scope>BIOPHYSICOCHEMICAL PROPERTIES</scope>
    <scope>SUBUNIT</scope>
    <source>
        <strain>DSM 13188 / CCUG 43137 / CIP 107056 / KCTC 3805 / KK19</strain>
    </source>
</reference>
<dbReference type="EC" id="2.4.1.392" evidence="2"/>
<dbReference type="EMBL" id="CP009285">
    <property type="protein sequence ID" value="AIQ57809.1"/>
    <property type="molecule type" value="Genomic_DNA"/>
</dbReference>
<dbReference type="RefSeq" id="WP_042212128.1">
    <property type="nucleotide sequence ID" value="NZ_CP009285.1"/>
</dbReference>
<dbReference type="KEGG" id="pbd:PBOR_13355"/>
<dbReference type="HOGENOM" id="CLU_019054_0_0_9"/>
<dbReference type="OrthoDB" id="9769991at2"/>
<dbReference type="BioCyc" id="MetaCyc:MONOMER-124338"/>
<dbReference type="Proteomes" id="UP000029518">
    <property type="component" value="Chromosome"/>
</dbReference>
<dbReference type="GO" id="GO:0005737">
    <property type="term" value="C:cytoplasm"/>
    <property type="evidence" value="ECO:0007669"/>
    <property type="project" value="UniProtKB-SubCell"/>
</dbReference>
<dbReference type="GO" id="GO:0030246">
    <property type="term" value="F:carbohydrate binding"/>
    <property type="evidence" value="ECO:0007669"/>
    <property type="project" value="InterPro"/>
</dbReference>
<dbReference type="GO" id="GO:0016757">
    <property type="term" value="F:glycosyltransferase activity"/>
    <property type="evidence" value="ECO:0007669"/>
    <property type="project" value="UniProtKB-KW"/>
</dbReference>
<dbReference type="GO" id="GO:0005975">
    <property type="term" value="P:carbohydrate metabolic process"/>
    <property type="evidence" value="ECO:0007669"/>
    <property type="project" value="InterPro"/>
</dbReference>
<dbReference type="Gene3D" id="1.50.10.10">
    <property type="match status" value="1"/>
</dbReference>
<dbReference type="Gene3D" id="2.70.98.40">
    <property type="entry name" value="Glycoside hydrolase, family 65, N-terminal domain"/>
    <property type="match status" value="1"/>
</dbReference>
<dbReference type="Gene3D" id="2.60.420.10">
    <property type="entry name" value="Maltose phosphorylase, domain 3"/>
    <property type="match status" value="1"/>
</dbReference>
<dbReference type="InterPro" id="IPR008928">
    <property type="entry name" value="6-hairpin_glycosidase_sf"/>
</dbReference>
<dbReference type="InterPro" id="IPR012341">
    <property type="entry name" value="6hp_glycosidase-like_sf"/>
</dbReference>
<dbReference type="InterPro" id="IPR009342">
    <property type="entry name" value="Carb-bd_put_dom"/>
</dbReference>
<dbReference type="InterPro" id="IPR011013">
    <property type="entry name" value="Gal_mutarotase_sf_dom"/>
</dbReference>
<dbReference type="InterPro" id="IPR033432">
    <property type="entry name" value="GH36_catalytic"/>
</dbReference>
<dbReference type="InterPro" id="IPR052047">
    <property type="entry name" value="GH94_Enzymes"/>
</dbReference>
<dbReference type="InterPro" id="IPR037018">
    <property type="entry name" value="Glyco_hydro_65_N_sf"/>
</dbReference>
<dbReference type="InterPro" id="IPR010383">
    <property type="entry name" value="Glyco_hydrolase_94"/>
</dbReference>
<dbReference type="PANTHER" id="PTHR37469:SF2">
    <property type="entry name" value="CELLOBIONIC ACID PHOSPHORYLASE"/>
    <property type="match status" value="1"/>
</dbReference>
<dbReference type="PANTHER" id="PTHR37469">
    <property type="entry name" value="CELLOBIONIC ACID PHOSPHORYLASE-RELATED"/>
    <property type="match status" value="1"/>
</dbReference>
<dbReference type="Pfam" id="PF17167">
    <property type="entry name" value="Glyco_hydro_36"/>
    <property type="match status" value="1"/>
</dbReference>
<dbReference type="Pfam" id="PF06165">
    <property type="entry name" value="Glyco_transf_36"/>
    <property type="match status" value="1"/>
</dbReference>
<dbReference type="SMART" id="SM01068">
    <property type="entry name" value="CBM_X"/>
    <property type="match status" value="1"/>
</dbReference>
<dbReference type="SUPFAM" id="SSF74650">
    <property type="entry name" value="Galactose mutarotase-like"/>
    <property type="match status" value="1"/>
</dbReference>
<dbReference type="SUPFAM" id="SSF48208">
    <property type="entry name" value="Six-hairpin glycosidases"/>
    <property type="match status" value="1"/>
</dbReference>
<name>BGBGP_PAEBO</name>
<feature type="chain" id="PRO_0000461988" description="3-O-beta-D-glucopyranosyl-beta-D-glucuronide phosphorylase">
    <location>
        <begin position="1"/>
        <end position="769"/>
    </location>
</feature>
<feature type="active site" description="Proton donor" evidence="1">
    <location>
        <position position="457"/>
    </location>
</feature>
<organism>
    <name type="scientific">Paenibacillus borealis</name>
    <dbReference type="NCBI Taxonomy" id="160799"/>
    <lineage>
        <taxon>Bacteria</taxon>
        <taxon>Bacillati</taxon>
        <taxon>Bacillota</taxon>
        <taxon>Bacilli</taxon>
        <taxon>Bacillales</taxon>
        <taxon>Paenibacillaceae</taxon>
        <taxon>Paenibacillus</taxon>
    </lineage>
</organism>